<accession>A0A125SXN2</accession>
<comment type="function">
    <text evidence="3">Oxidosqualene cyclase involved in the biosynthesis of alpha-onocerin, a triterpenoid characterized by a symmetrical structure due to cyclizations at both termini of dioxidosqualene that inhibits acetylcholinesterase. Catalyzes the second half of the cyclization, exclusively from pre-alpha-onocerin.</text>
</comment>
<comment type="catalytic activity">
    <reaction evidence="3">
        <text>pre-alpha-onocerin = alpha-onocerin</text>
        <dbReference type="Rhea" id="RHEA:54668"/>
        <dbReference type="ChEBI" id="CHEBI:138303"/>
        <dbReference type="ChEBI" id="CHEBI:138305"/>
        <dbReference type="EC" id="5.4.99.66"/>
    </reaction>
</comment>
<comment type="pathway">
    <text evidence="3">Secondary metabolite biosynthesis; terpenoid biosynthesis.</text>
</comment>
<comment type="similarity">
    <text evidence="5">Belongs to the terpene cyclase/mutase family.</text>
</comment>
<sequence length="766" mass="87194">MWRLRTGSSTVDKADSWLSSLNNHLGRQIWCYDPEAGTPQEREAVEAECARFTANRHQQRQSADTLLRLQFQKEHSANRLPSRITVNEDHEVTEDDVTTTLCRALQFYSQLQTDDGHWSGDHSGPMFFLPGMVIALYVTGALDSVLSEHHQREICRYIYNHQRQDGSWGLHPEGTGTLFGTVLSYVTLRLMGESKSNSNNREALRKAQTWIIDHGGATDVPSWGKFWLAVLGVYEWSGVNPLPPESWLLPKSLIAHPGRLPVLYRFIFLPMSYIYARRLSHHLTKIIEDLRKELYTIPYEDIDWNHARKLGAKEEIVPRSVVQDVILSILHNYVEPIMSHWPGFLLRQKALALIMEHIHHEDETTQYLCVCPVSKALNMLCCWLEDRNSDAFKKHLSRVLDFLWLSEDGMKMQVCNGSQLWDTALSVRALISANLLNECSSMLRRAKLYIENTQIQESYPGDLDHWHRITSKGGWPQSTRDWGWPVSDCTAEALQAVLALSSQSTTDVGEALPEERIHECINVLLSFQKSNGSFAPFDARNPLEGPKIWNHTESPGYKSLDFECVECTSSVIQALAAFNKIYPEHRAKEISISIQEGTRFIERLQNSDGSWSGTWGICFTYATWFGIMGLLASGARYYESIAIQRACEFILSKQLPNGGWGEHFHSFKNKVYTNLEGERAHVVHTSWSMLALLATGQEGRDAIPLHRAAKILINAQMETGDYSQEGVVGAVCGDHTISYATYRCVFPIWALGEYRYKLFGKKNMYI</sequence>
<keyword id="KW-0413">Isomerase</keyword>
<keyword id="KW-0677">Repeat</keyword>
<organism>
    <name type="scientific">Lycopodium clavatum</name>
    <name type="common">Stag's-horn clubmoss</name>
    <dbReference type="NCBI Taxonomy" id="3252"/>
    <lineage>
        <taxon>Eukaryota</taxon>
        <taxon>Viridiplantae</taxon>
        <taxon>Streptophyta</taxon>
        <taxon>Embryophyta</taxon>
        <taxon>Tracheophyta</taxon>
        <taxon>Lycopodiopsida</taxon>
        <taxon>Lycopodiales</taxon>
        <taxon>Lycopodiaceae</taxon>
        <taxon>Lycopodioideae</taxon>
        <taxon>Lycopodium</taxon>
    </lineage>
</organism>
<protein>
    <recommendedName>
        <fullName evidence="4">Alpha-onocerin synthase LCD</fullName>
        <ecNumber evidence="3">5.4.99.66</ecNumber>
    </recommendedName>
</protein>
<dbReference type="EC" id="5.4.99.66" evidence="3"/>
<dbReference type="EMBL" id="LC053636">
    <property type="protein sequence ID" value="BAU46472.1"/>
    <property type="molecule type" value="mRNA"/>
</dbReference>
<dbReference type="SMR" id="A0A125SXN2"/>
<dbReference type="KEGG" id="ag:BAU46472"/>
<dbReference type="BRENDA" id="5.4.99.66">
    <property type="organism ID" value="3106"/>
</dbReference>
<dbReference type="UniPathway" id="UPA00213"/>
<dbReference type="GO" id="GO:0005811">
    <property type="term" value="C:lipid droplet"/>
    <property type="evidence" value="ECO:0007669"/>
    <property type="project" value="InterPro"/>
</dbReference>
<dbReference type="GO" id="GO:0016866">
    <property type="term" value="F:intramolecular transferase activity"/>
    <property type="evidence" value="ECO:0007669"/>
    <property type="project" value="InterPro"/>
</dbReference>
<dbReference type="GO" id="GO:0016104">
    <property type="term" value="P:triterpenoid biosynthetic process"/>
    <property type="evidence" value="ECO:0000314"/>
    <property type="project" value="UniProtKB"/>
</dbReference>
<dbReference type="CDD" id="cd02892">
    <property type="entry name" value="SQCY_1"/>
    <property type="match status" value="1"/>
</dbReference>
<dbReference type="FunFam" id="1.50.10.20:FF:000011">
    <property type="entry name" value="Terpene cyclase/mutase family member"/>
    <property type="match status" value="1"/>
</dbReference>
<dbReference type="Gene3D" id="1.50.10.20">
    <property type="match status" value="2"/>
</dbReference>
<dbReference type="InterPro" id="IPR032696">
    <property type="entry name" value="SQ_cyclase_C"/>
</dbReference>
<dbReference type="InterPro" id="IPR032697">
    <property type="entry name" value="SQ_cyclase_N"/>
</dbReference>
<dbReference type="InterPro" id="IPR018333">
    <property type="entry name" value="Squalene_cyclase"/>
</dbReference>
<dbReference type="InterPro" id="IPR002365">
    <property type="entry name" value="Terpene_synthase_CS"/>
</dbReference>
<dbReference type="InterPro" id="IPR008930">
    <property type="entry name" value="Terpenoid_cyclase/PrenylTrfase"/>
</dbReference>
<dbReference type="NCBIfam" id="TIGR01787">
    <property type="entry name" value="squalene_cyclas"/>
    <property type="match status" value="1"/>
</dbReference>
<dbReference type="PANTHER" id="PTHR11764:SF20">
    <property type="entry name" value="LANOSTEROL SYNTHASE"/>
    <property type="match status" value="1"/>
</dbReference>
<dbReference type="PANTHER" id="PTHR11764">
    <property type="entry name" value="TERPENE CYCLASE/MUTASE FAMILY MEMBER"/>
    <property type="match status" value="1"/>
</dbReference>
<dbReference type="Pfam" id="PF13243">
    <property type="entry name" value="SQHop_cyclase_C"/>
    <property type="match status" value="1"/>
</dbReference>
<dbReference type="Pfam" id="PF13249">
    <property type="entry name" value="SQHop_cyclase_N"/>
    <property type="match status" value="1"/>
</dbReference>
<dbReference type="SUPFAM" id="SSF48239">
    <property type="entry name" value="Terpenoid cyclases/Protein prenyltransferases"/>
    <property type="match status" value="2"/>
</dbReference>
<dbReference type="PROSITE" id="PS01074">
    <property type="entry name" value="TERPENE_SYNTHASES"/>
    <property type="match status" value="1"/>
</dbReference>
<feature type="chain" id="PRO_0000445705" description="Alpha-onocerin synthase LCD">
    <location>
        <begin position="1"/>
        <end position="766"/>
    </location>
</feature>
<feature type="repeat" description="PFTB 1" evidence="2">
    <location>
        <begin position="101"/>
        <end position="143"/>
    </location>
</feature>
<feature type="repeat" description="PFTB 2" evidence="2">
    <location>
        <begin position="151"/>
        <end position="192"/>
    </location>
</feature>
<feature type="repeat" description="PFTB 3" evidence="2">
    <location>
        <begin position="456"/>
        <end position="507"/>
    </location>
</feature>
<feature type="repeat" description="PFTB 4" evidence="2">
    <location>
        <begin position="517"/>
        <end position="558"/>
    </location>
</feature>
<feature type="repeat" description="PFTB 5" evidence="2">
    <location>
        <begin position="594"/>
        <end position="634"/>
    </location>
</feature>
<feature type="repeat" description="PFTB 6" evidence="2">
    <location>
        <begin position="643"/>
        <end position="684"/>
    </location>
</feature>
<feature type="repeat" description="PFTB 7" evidence="2">
    <location>
        <begin position="705"/>
        <end position="752"/>
    </location>
</feature>
<feature type="active site" description="Proton donor" evidence="1">
    <location>
        <position position="488"/>
    </location>
</feature>
<feature type="site" description="Transition state stabilizer" evidence="1">
    <location>
        <position position="421"/>
    </location>
</feature>
<feature type="site" description="Transition state stabilizer" evidence="1">
    <location>
        <position position="615"/>
    </location>
</feature>
<name>LCD_LYCCL</name>
<evidence type="ECO:0000250" key="1">
    <source>
        <dbReference type="UniProtKB" id="P48449"/>
    </source>
</evidence>
<evidence type="ECO:0000255" key="2"/>
<evidence type="ECO:0000269" key="3">
    <source>
    </source>
</evidence>
<evidence type="ECO:0000303" key="4">
    <source>
    </source>
</evidence>
<evidence type="ECO:0000305" key="5"/>
<reference key="1">
    <citation type="journal article" date="2016" name="ChemBioChem">
        <title>Onocerin biosynthesis requires two highly dedicated triterpene cyclases in a fern Lycopodium clavatum.</title>
        <authorList>
            <person name="Araki T."/>
            <person name="Saga Y."/>
            <person name="Marugami M."/>
            <person name="Otaka J."/>
            <person name="Araya H."/>
            <person name="Saito K."/>
            <person name="Yamazaki M."/>
            <person name="Suzuki H."/>
            <person name="Kushiro T."/>
        </authorList>
    </citation>
    <scope>NUCLEOTIDE SEQUENCE [MRNA]</scope>
    <scope>FUNCTION</scope>
    <scope>CATALYTIC ACTIVITY</scope>
    <scope>PATHWAY</scope>
</reference>
<proteinExistence type="evidence at protein level"/>
<gene>
    <name evidence="4" type="primary">LCD</name>
</gene>